<name>COBS_DESHY</name>
<reference key="1">
    <citation type="journal article" date="2006" name="J. Bacteriol.">
        <title>Complete genome sequence of the dehalorespiring bacterium Desulfitobacterium hafniense Y51 and comparison with Dehalococcoides ethenogenes 195.</title>
        <authorList>
            <person name="Nonaka H."/>
            <person name="Keresztes G."/>
            <person name="Shinoda Y."/>
            <person name="Ikenaga Y."/>
            <person name="Abe M."/>
            <person name="Naito K."/>
            <person name="Inatomi K."/>
            <person name="Furukawa K."/>
            <person name="Inui M."/>
            <person name="Yukawa H."/>
        </authorList>
    </citation>
    <scope>NUCLEOTIDE SEQUENCE [LARGE SCALE GENOMIC DNA]</scope>
    <source>
        <strain>Y51</strain>
    </source>
</reference>
<organism>
    <name type="scientific">Desulfitobacterium hafniense (strain Y51)</name>
    <dbReference type="NCBI Taxonomy" id="138119"/>
    <lineage>
        <taxon>Bacteria</taxon>
        <taxon>Bacillati</taxon>
        <taxon>Bacillota</taxon>
        <taxon>Clostridia</taxon>
        <taxon>Eubacteriales</taxon>
        <taxon>Desulfitobacteriaceae</taxon>
        <taxon>Desulfitobacterium</taxon>
    </lineage>
</organism>
<dbReference type="EC" id="2.7.8.26" evidence="1"/>
<dbReference type="EMBL" id="AP008230">
    <property type="protein sequence ID" value="BAE83905.1"/>
    <property type="molecule type" value="Genomic_DNA"/>
</dbReference>
<dbReference type="STRING" id="138119.DSY2116"/>
<dbReference type="KEGG" id="dsy:DSY2116"/>
<dbReference type="eggNOG" id="COG0368">
    <property type="taxonomic scope" value="Bacteria"/>
</dbReference>
<dbReference type="HOGENOM" id="CLU_057426_3_1_9"/>
<dbReference type="UniPathway" id="UPA00148">
    <property type="reaction ID" value="UER00238"/>
</dbReference>
<dbReference type="Proteomes" id="UP000001946">
    <property type="component" value="Chromosome"/>
</dbReference>
<dbReference type="GO" id="GO:0005886">
    <property type="term" value="C:plasma membrane"/>
    <property type="evidence" value="ECO:0007669"/>
    <property type="project" value="UniProtKB-SubCell"/>
</dbReference>
<dbReference type="GO" id="GO:0051073">
    <property type="term" value="F:adenosylcobinamide-GDP ribazoletransferase activity"/>
    <property type="evidence" value="ECO:0007669"/>
    <property type="project" value="UniProtKB-UniRule"/>
</dbReference>
<dbReference type="GO" id="GO:0008818">
    <property type="term" value="F:cobalamin 5'-phosphate synthase activity"/>
    <property type="evidence" value="ECO:0007669"/>
    <property type="project" value="UniProtKB-UniRule"/>
</dbReference>
<dbReference type="GO" id="GO:0009236">
    <property type="term" value="P:cobalamin biosynthetic process"/>
    <property type="evidence" value="ECO:0007669"/>
    <property type="project" value="UniProtKB-UniRule"/>
</dbReference>
<dbReference type="HAMAP" id="MF_00719">
    <property type="entry name" value="CobS"/>
    <property type="match status" value="1"/>
</dbReference>
<dbReference type="InterPro" id="IPR003805">
    <property type="entry name" value="CobS"/>
</dbReference>
<dbReference type="NCBIfam" id="TIGR00317">
    <property type="entry name" value="cobS"/>
    <property type="match status" value="1"/>
</dbReference>
<dbReference type="PANTHER" id="PTHR34148">
    <property type="entry name" value="ADENOSYLCOBINAMIDE-GDP RIBAZOLETRANSFERASE"/>
    <property type="match status" value="1"/>
</dbReference>
<dbReference type="PANTHER" id="PTHR34148:SF1">
    <property type="entry name" value="ADENOSYLCOBINAMIDE-GDP RIBAZOLETRANSFERASE"/>
    <property type="match status" value="1"/>
</dbReference>
<dbReference type="Pfam" id="PF02654">
    <property type="entry name" value="CobS"/>
    <property type="match status" value="1"/>
</dbReference>
<gene>
    <name evidence="1" type="primary">cobS</name>
    <name type="ordered locus">DSY2116</name>
</gene>
<protein>
    <recommendedName>
        <fullName evidence="1">Adenosylcobinamide-GDP ribazoletransferase</fullName>
        <ecNumber evidence="1">2.7.8.26</ecNumber>
    </recommendedName>
    <alternativeName>
        <fullName evidence="1">Cobalamin synthase</fullName>
    </alternativeName>
    <alternativeName>
        <fullName evidence="1">Cobalamin-5'-phosphate synthase</fullName>
    </alternativeName>
</protein>
<comment type="function">
    <text evidence="1">Joins adenosylcobinamide-GDP and alpha-ribazole to generate adenosylcobalamin (Ado-cobalamin). Also synthesizes adenosylcobalamin 5'-phosphate from adenosylcobinamide-GDP and alpha-ribazole 5'-phosphate.</text>
</comment>
<comment type="catalytic activity">
    <reaction evidence="1">
        <text>alpha-ribazole + adenosylcob(III)inamide-GDP = adenosylcob(III)alamin + GMP + H(+)</text>
        <dbReference type="Rhea" id="RHEA:16049"/>
        <dbReference type="ChEBI" id="CHEBI:10329"/>
        <dbReference type="ChEBI" id="CHEBI:15378"/>
        <dbReference type="ChEBI" id="CHEBI:18408"/>
        <dbReference type="ChEBI" id="CHEBI:58115"/>
        <dbReference type="ChEBI" id="CHEBI:60487"/>
        <dbReference type="EC" id="2.7.8.26"/>
    </reaction>
</comment>
<comment type="catalytic activity">
    <reaction evidence="1">
        <text>alpha-ribazole 5'-phosphate + adenosylcob(III)inamide-GDP = adenosylcob(III)alamin 5'-phosphate + GMP + H(+)</text>
        <dbReference type="Rhea" id="RHEA:23560"/>
        <dbReference type="ChEBI" id="CHEBI:15378"/>
        <dbReference type="ChEBI" id="CHEBI:57918"/>
        <dbReference type="ChEBI" id="CHEBI:58115"/>
        <dbReference type="ChEBI" id="CHEBI:60487"/>
        <dbReference type="ChEBI" id="CHEBI:60493"/>
        <dbReference type="EC" id="2.7.8.26"/>
    </reaction>
</comment>
<comment type="cofactor">
    <cofactor evidence="1">
        <name>Mg(2+)</name>
        <dbReference type="ChEBI" id="CHEBI:18420"/>
    </cofactor>
</comment>
<comment type="pathway">
    <text evidence="1">Cofactor biosynthesis; adenosylcobalamin biosynthesis; adenosylcobalamin from cob(II)yrinate a,c-diamide: step 7/7.</text>
</comment>
<comment type="subcellular location">
    <subcellularLocation>
        <location evidence="1">Cell membrane</location>
        <topology evidence="1">Multi-pass membrane protein</topology>
    </subcellularLocation>
</comment>
<comment type="similarity">
    <text evidence="1">Belongs to the CobS family.</text>
</comment>
<proteinExistence type="inferred from homology"/>
<feature type="chain" id="PRO_1000148020" description="Adenosylcobinamide-GDP ribazoletransferase">
    <location>
        <begin position="1"/>
        <end position="254"/>
    </location>
</feature>
<feature type="transmembrane region" description="Helical" evidence="1">
    <location>
        <begin position="36"/>
        <end position="56"/>
    </location>
</feature>
<feature type="transmembrane region" description="Helical" evidence="1">
    <location>
        <begin position="61"/>
        <end position="81"/>
    </location>
</feature>
<feature type="transmembrane region" description="Helical" evidence="1">
    <location>
        <begin position="114"/>
        <end position="134"/>
    </location>
</feature>
<feature type="transmembrane region" description="Helical" evidence="1">
    <location>
        <begin position="138"/>
        <end position="158"/>
    </location>
</feature>
<feature type="transmembrane region" description="Helical" evidence="1">
    <location>
        <begin position="197"/>
        <end position="217"/>
    </location>
</feature>
<feature type="transmembrane region" description="Helical" evidence="1">
    <location>
        <begin position="232"/>
        <end position="252"/>
    </location>
</feature>
<keyword id="KW-1003">Cell membrane</keyword>
<keyword id="KW-0169">Cobalamin biosynthesis</keyword>
<keyword id="KW-0460">Magnesium</keyword>
<keyword id="KW-0472">Membrane</keyword>
<keyword id="KW-1185">Reference proteome</keyword>
<keyword id="KW-0808">Transferase</keyword>
<keyword id="KW-0812">Transmembrane</keyword>
<keyword id="KW-1133">Transmembrane helix</keyword>
<evidence type="ECO:0000255" key="1">
    <source>
        <dbReference type="HAMAP-Rule" id="MF_00719"/>
    </source>
</evidence>
<accession>Q24VN7</accession>
<sequence length="254" mass="28306">MPSMRKLWIALTFLTRIPLPQPEQVTSEEFTQSQHYYPLVGLILGGALWLALTLLLPHYPPLVTAALLLALELILTGGIHLDGLMDSMDGLLSARTPERMLEIMKDSHVGAFGALSAMVYLLLKFSLLAGLLALSSPLVPYLVLFMPILSRWIFLIGVHYFPYARAQGFGQGFHETSRQTRWLFLGEGLLLLFLTYWVLQWPGIAGFILATLFILLFTRKVSRLLGGLTGDLYGASIELSELLFLLGAFPLLYP</sequence>